<organism>
    <name type="scientific">Mus musculus</name>
    <name type="common">Mouse</name>
    <dbReference type="NCBI Taxonomy" id="10090"/>
    <lineage>
        <taxon>Eukaryota</taxon>
        <taxon>Metazoa</taxon>
        <taxon>Chordata</taxon>
        <taxon>Craniata</taxon>
        <taxon>Vertebrata</taxon>
        <taxon>Euteleostomi</taxon>
        <taxon>Mammalia</taxon>
        <taxon>Eutheria</taxon>
        <taxon>Euarchontoglires</taxon>
        <taxon>Glires</taxon>
        <taxon>Rodentia</taxon>
        <taxon>Myomorpha</taxon>
        <taxon>Muroidea</taxon>
        <taxon>Muridae</taxon>
        <taxon>Murinae</taxon>
        <taxon>Mus</taxon>
        <taxon>Mus</taxon>
    </lineage>
</organism>
<name>SPO11_MOUSE</name>
<dbReference type="EC" id="5.6.2.2" evidence="15"/>
<dbReference type="EMBL" id="AF126400">
    <property type="protein sequence ID" value="AAD49561.1"/>
    <property type="molecule type" value="mRNA"/>
</dbReference>
<dbReference type="EMBL" id="AF149309">
    <property type="protein sequence ID" value="AAD44811.1"/>
    <property type="molecule type" value="mRNA"/>
</dbReference>
<dbReference type="EMBL" id="AF169386">
    <property type="protein sequence ID" value="AAD52563.1"/>
    <property type="molecule type" value="mRNA"/>
</dbReference>
<dbReference type="EMBL" id="AF163053">
    <property type="protein sequence ID" value="AAD43588.1"/>
    <property type="molecule type" value="mRNA"/>
</dbReference>
<dbReference type="EMBL" id="AF163052">
    <property type="protein sequence ID" value="AAD43591.1"/>
    <property type="molecule type" value="Genomic_DNA"/>
</dbReference>
<dbReference type="EMBL" id="AF163049">
    <property type="protein sequence ID" value="AAD43591.1"/>
    <property type="status" value="JOINED"/>
    <property type="molecule type" value="Genomic_DNA"/>
</dbReference>
<dbReference type="EMBL" id="AF163051">
    <property type="protein sequence ID" value="AAD43591.1"/>
    <property type="status" value="JOINED"/>
    <property type="molecule type" value="Genomic_DNA"/>
</dbReference>
<dbReference type="EMBL" id="AF163052">
    <property type="protein sequence ID" value="AAD43592.1"/>
    <property type="molecule type" value="Genomic_DNA"/>
</dbReference>
<dbReference type="EMBL" id="AF163049">
    <property type="protein sequence ID" value="AAD43592.1"/>
    <property type="status" value="JOINED"/>
    <property type="molecule type" value="Genomic_DNA"/>
</dbReference>
<dbReference type="EMBL" id="AF163051">
    <property type="protein sequence ID" value="AAD43592.1"/>
    <property type="status" value="JOINED"/>
    <property type="molecule type" value="Genomic_DNA"/>
</dbReference>
<dbReference type="EMBL" id="AF163054">
    <property type="protein sequence ID" value="AAD43589.1"/>
    <property type="molecule type" value="mRNA"/>
</dbReference>
<dbReference type="EMBL" id="AF165313">
    <property type="protein sequence ID" value="AAF87090.1"/>
    <property type="molecule type" value="mRNA"/>
</dbReference>
<dbReference type="EMBL" id="AF167439">
    <property type="protein sequence ID" value="AAF87094.1"/>
    <property type="molecule type" value="mRNA"/>
</dbReference>
<dbReference type="EMBL" id="AF173848">
    <property type="protein sequence ID" value="AAF87096.1"/>
    <property type="molecule type" value="mRNA"/>
</dbReference>
<dbReference type="EMBL" id="AF443910">
    <property type="protein sequence ID" value="AAL32063.1"/>
    <property type="molecule type" value="Genomic_DNA"/>
</dbReference>
<dbReference type="CCDS" id="CCDS17137.1">
    <molecule id="Q9WTK8-1"/>
</dbReference>
<dbReference type="CCDS" id="CCDS50811.1">
    <molecule id="Q9WTK8-3"/>
</dbReference>
<dbReference type="CCDS" id="CCDS50812.1">
    <molecule id="Q9WTK8-4"/>
</dbReference>
<dbReference type="RefSeq" id="NP_001077428.1">
    <molecule id="Q9WTK8-3"/>
    <property type="nucleotide sequence ID" value="NM_001083959.2"/>
</dbReference>
<dbReference type="RefSeq" id="NP_001077429.1">
    <molecule id="Q9WTK8-4"/>
    <property type="nucleotide sequence ID" value="NM_001083960.2"/>
</dbReference>
<dbReference type="RefSeq" id="NP_001292363.1">
    <molecule id="Q9WTK8-5"/>
    <property type="nucleotide sequence ID" value="NM_001305434.2"/>
</dbReference>
<dbReference type="RefSeq" id="NP_036176.1">
    <molecule id="Q9WTK8-1"/>
    <property type="nucleotide sequence ID" value="NM_012046.3"/>
</dbReference>
<dbReference type="SMR" id="Q9WTK8"/>
<dbReference type="BioGRID" id="205092">
    <property type="interactions" value="1"/>
</dbReference>
<dbReference type="DIP" id="DIP-62006N"/>
<dbReference type="FunCoup" id="Q9WTK8">
    <property type="interactions" value="292"/>
</dbReference>
<dbReference type="IntAct" id="Q9WTK8">
    <property type="interactions" value="1"/>
</dbReference>
<dbReference type="STRING" id="10090.ENSMUSP00000059056"/>
<dbReference type="iPTMnet" id="Q9WTK8"/>
<dbReference type="PhosphoSitePlus" id="Q9WTK8"/>
<dbReference type="PaxDb" id="10090-ENSMUSP00000059056"/>
<dbReference type="ProteomicsDB" id="258598">
    <molecule id="Q9WTK8-1"/>
</dbReference>
<dbReference type="ProteomicsDB" id="258599">
    <molecule id="Q9WTK8-2"/>
</dbReference>
<dbReference type="ProteomicsDB" id="258600">
    <molecule id="Q9WTK8-3"/>
</dbReference>
<dbReference type="ProteomicsDB" id="258601">
    <molecule id="Q9WTK8-4"/>
</dbReference>
<dbReference type="ProteomicsDB" id="258602">
    <molecule id="Q9WTK8-5"/>
</dbReference>
<dbReference type="Antibodypedia" id="28951">
    <property type="antibodies" value="188 antibodies from 27 providers"/>
</dbReference>
<dbReference type="DNASU" id="26972"/>
<dbReference type="Ensembl" id="ENSMUST00000050442.15">
    <molecule id="Q9WTK8-1"/>
    <property type="protein sequence ID" value="ENSMUSP00000059056.10"/>
    <property type="gene ID" value="ENSMUSG00000005883.16"/>
</dbReference>
<dbReference type="Ensembl" id="ENSMUST00000109125.8">
    <molecule id="Q9WTK8-4"/>
    <property type="protein sequence ID" value="ENSMUSP00000104753.2"/>
    <property type="gene ID" value="ENSMUSG00000005883.16"/>
</dbReference>
<dbReference type="Ensembl" id="ENSMUST00000109126.5">
    <molecule id="Q9WTK8-3"/>
    <property type="protein sequence ID" value="ENSMUSP00000104754.4"/>
    <property type="gene ID" value="ENSMUSG00000005883.16"/>
</dbReference>
<dbReference type="GeneID" id="26972"/>
<dbReference type="KEGG" id="mmu:26972"/>
<dbReference type="UCSC" id="uc008odd.1">
    <molecule id="Q9WTK8-1"/>
    <property type="organism name" value="mouse"/>
</dbReference>
<dbReference type="UCSC" id="uc008ode.1">
    <molecule id="Q9WTK8-4"/>
    <property type="organism name" value="mouse"/>
</dbReference>
<dbReference type="UCSC" id="uc008odf.1">
    <molecule id="Q9WTK8-3"/>
    <property type="organism name" value="mouse"/>
</dbReference>
<dbReference type="UCSC" id="uc012ckq.1">
    <molecule id="Q9WTK8-5"/>
    <property type="organism name" value="mouse"/>
</dbReference>
<dbReference type="AGR" id="MGI:1349669"/>
<dbReference type="CTD" id="23626"/>
<dbReference type="MGI" id="MGI:1349669">
    <property type="gene designation" value="Spo11"/>
</dbReference>
<dbReference type="VEuPathDB" id="HostDB:ENSMUSG00000005883"/>
<dbReference type="eggNOG" id="KOG2795">
    <property type="taxonomic scope" value="Eukaryota"/>
</dbReference>
<dbReference type="GeneTree" id="ENSGT00390000001787"/>
<dbReference type="HOGENOM" id="CLU_037229_1_1_1"/>
<dbReference type="InParanoid" id="Q9WTK8"/>
<dbReference type="OMA" id="IETAGMF"/>
<dbReference type="OrthoDB" id="5377392at2759"/>
<dbReference type="PhylomeDB" id="Q9WTK8"/>
<dbReference type="TreeFam" id="TF314157"/>
<dbReference type="BioGRID-ORCS" id="26972">
    <property type="hits" value="2 hits in 78 CRISPR screens"/>
</dbReference>
<dbReference type="PRO" id="PR:Q9WTK8"/>
<dbReference type="Proteomes" id="UP000000589">
    <property type="component" value="Chromosome 2"/>
</dbReference>
<dbReference type="RNAct" id="Q9WTK8">
    <property type="molecule type" value="protein"/>
</dbReference>
<dbReference type="Bgee" id="ENSMUSG00000005883">
    <property type="expression patterns" value="Expressed in spermatocyte and 31 other cell types or tissues"/>
</dbReference>
<dbReference type="GO" id="GO:0000781">
    <property type="term" value="C:chromosome, telomeric region"/>
    <property type="evidence" value="ECO:0000314"/>
    <property type="project" value="MGI"/>
</dbReference>
<dbReference type="GO" id="GO:0005654">
    <property type="term" value="C:nucleoplasm"/>
    <property type="evidence" value="ECO:0000304"/>
    <property type="project" value="Reactome"/>
</dbReference>
<dbReference type="GO" id="GO:0005524">
    <property type="term" value="F:ATP binding"/>
    <property type="evidence" value="ECO:0007669"/>
    <property type="project" value="InterPro"/>
</dbReference>
<dbReference type="GO" id="GO:0003677">
    <property type="term" value="F:DNA binding"/>
    <property type="evidence" value="ECO:0007669"/>
    <property type="project" value="UniProtKB-KW"/>
</dbReference>
<dbReference type="GO" id="GO:0003918">
    <property type="term" value="F:DNA topoisomerase type II (double strand cut, ATP-hydrolyzing) activity"/>
    <property type="evidence" value="ECO:0007669"/>
    <property type="project" value="UniProtKB-EC"/>
</dbReference>
<dbReference type="GO" id="GO:0046872">
    <property type="term" value="F:metal ion binding"/>
    <property type="evidence" value="ECO:0007669"/>
    <property type="project" value="UniProtKB-KW"/>
</dbReference>
<dbReference type="GO" id="GO:1990918">
    <property type="term" value="P:double-strand break repair involved in meiotic recombination"/>
    <property type="evidence" value="ECO:0000316"/>
    <property type="project" value="MGI"/>
</dbReference>
<dbReference type="GO" id="GO:0007129">
    <property type="term" value="P:homologous chromosome pairing at meiosis"/>
    <property type="evidence" value="ECO:0000315"/>
    <property type="project" value="MGI"/>
</dbReference>
<dbReference type="GO" id="GO:0007141">
    <property type="term" value="P:male meiosis I"/>
    <property type="evidence" value="ECO:0000315"/>
    <property type="project" value="MGI"/>
</dbReference>
<dbReference type="GO" id="GO:0042138">
    <property type="term" value="P:meiotic DNA double-strand break formation"/>
    <property type="evidence" value="ECO:0007669"/>
    <property type="project" value="InterPro"/>
</dbReference>
<dbReference type="GO" id="GO:0045141">
    <property type="term" value="P:meiotic telomere clustering"/>
    <property type="evidence" value="ECO:0000315"/>
    <property type="project" value="MGI"/>
</dbReference>
<dbReference type="GO" id="GO:0048477">
    <property type="term" value="P:oogenesis"/>
    <property type="evidence" value="ECO:0000315"/>
    <property type="project" value="MGI"/>
</dbReference>
<dbReference type="GO" id="GO:0001541">
    <property type="term" value="P:ovarian follicle development"/>
    <property type="evidence" value="ECO:0000315"/>
    <property type="project" value="MGI"/>
</dbReference>
<dbReference type="GO" id="GO:0034502">
    <property type="term" value="P:protein localization to chromosome"/>
    <property type="evidence" value="ECO:0000315"/>
    <property type="project" value="MGI"/>
</dbReference>
<dbReference type="GO" id="GO:0007131">
    <property type="term" value="P:reciprocal meiotic recombination"/>
    <property type="evidence" value="ECO:0000315"/>
    <property type="project" value="MGI"/>
</dbReference>
<dbReference type="GO" id="GO:0007286">
    <property type="term" value="P:spermatid development"/>
    <property type="evidence" value="ECO:0000315"/>
    <property type="project" value="MGI"/>
</dbReference>
<dbReference type="GO" id="GO:0007130">
    <property type="term" value="P:synaptonemal complex assembly"/>
    <property type="evidence" value="ECO:0000315"/>
    <property type="project" value="MGI"/>
</dbReference>
<dbReference type="CDD" id="cd00223">
    <property type="entry name" value="TOPRIM_TopoIIB_SPO"/>
    <property type="match status" value="1"/>
</dbReference>
<dbReference type="FunFam" id="3.40.1360.10:FF:000003">
    <property type="entry name" value="DNA topoisomerase 6 subunit A"/>
    <property type="match status" value="1"/>
</dbReference>
<dbReference type="FunFam" id="1.10.10.10:FF:000415">
    <property type="entry name" value="meiotic recombination protein SPO11 isoform X1"/>
    <property type="match status" value="1"/>
</dbReference>
<dbReference type="Gene3D" id="3.40.1360.10">
    <property type="match status" value="1"/>
</dbReference>
<dbReference type="Gene3D" id="1.10.10.10">
    <property type="entry name" value="Winged helix-like DNA-binding domain superfamily/Winged helix DNA-binding domain"/>
    <property type="match status" value="1"/>
</dbReference>
<dbReference type="InterPro" id="IPR004084">
    <property type="entry name" value="Meiosis_Spo11"/>
</dbReference>
<dbReference type="InterPro" id="IPR013048">
    <property type="entry name" value="Meiotic_Spo11"/>
</dbReference>
<dbReference type="InterPro" id="IPR002815">
    <property type="entry name" value="Spo11/TopoVI_A"/>
</dbReference>
<dbReference type="InterPro" id="IPR013049">
    <property type="entry name" value="Spo11/TopoVI_A_N"/>
</dbReference>
<dbReference type="InterPro" id="IPR036078">
    <property type="entry name" value="Spo11/TopoVI_A_sf"/>
</dbReference>
<dbReference type="InterPro" id="IPR034136">
    <property type="entry name" value="TOPRIM_Topo6A/Spo11"/>
</dbReference>
<dbReference type="InterPro" id="IPR036388">
    <property type="entry name" value="WH-like_DNA-bd_sf"/>
</dbReference>
<dbReference type="PANTHER" id="PTHR10848">
    <property type="entry name" value="MEIOTIC RECOMBINATION PROTEIN SPO11"/>
    <property type="match status" value="1"/>
</dbReference>
<dbReference type="PANTHER" id="PTHR10848:SF0">
    <property type="entry name" value="MEIOTIC RECOMBINATION PROTEIN SPO11"/>
    <property type="match status" value="1"/>
</dbReference>
<dbReference type="Pfam" id="PF03533">
    <property type="entry name" value="SPO11_like"/>
    <property type="match status" value="1"/>
</dbReference>
<dbReference type="Pfam" id="PF21180">
    <property type="entry name" value="TOP6A-Spo11_Toprim"/>
    <property type="match status" value="1"/>
</dbReference>
<dbReference type="Pfam" id="PF04406">
    <property type="entry name" value="TP6A_N"/>
    <property type="match status" value="1"/>
</dbReference>
<dbReference type="PRINTS" id="PR01551">
    <property type="entry name" value="SPO11HOMOLOG"/>
</dbReference>
<dbReference type="PRINTS" id="PR01550">
    <property type="entry name" value="TOP6AFAMILY"/>
</dbReference>
<dbReference type="SUPFAM" id="SSF56726">
    <property type="entry name" value="DNA topoisomerase IV, alpha subunit"/>
    <property type="match status" value="1"/>
</dbReference>
<dbReference type="PROSITE" id="PS52041">
    <property type="entry name" value="TOPO_IIB"/>
    <property type="match status" value="1"/>
</dbReference>
<sequence length="396" mass="44570">MAFAPMGPEASFFDALDRHRASLLAMVKRGAGETPAGATRVASSSEVLTAIENIIQDIIKSLARNEVPAFTIDNRSSWENIMFDDSVGLRMIPQCTTRKIRSDSPKSVKKFALILKVLSMIYKLIQSDTYATKRDIYYTDSQLFGNQAAVDSAIDDISCMLKVPRRSLHVLSTSKGLIAGNLRYMEEDGTRVQCTCSATATAVPTNIQGMQHLITDAKFLLIVEKDATFQRLLDDNFCSRMSPCIMVTGKGVPDLNTRLLVKKLWDTFHIPVFTLVDADPYGIEIMCIYKYGSMSMSFEAHNLTIPTIRWLGLLPSDIQRLNIPKDSLIPLTKHDQMKLDSILKRPYITYQPLWKKELEMMADSKMKAEIQALTLLSSDYLSRVYLPNKLRFGGWI</sequence>
<proteinExistence type="evidence at protein level"/>
<protein>
    <recommendedName>
        <fullName>Meiotic recombination protein SPO11</fullName>
        <ecNumber evidence="15">5.6.2.2</ecNumber>
    </recommendedName>
</protein>
<comment type="function">
    <molecule>Isoform 1</molecule>
    <text evidence="8 9">Component of a topoisomerase 6 complex specifically required for meiotic recombination. Together with TOP6BL, mediates DNA cleavage that forms the double-strand breaks (DSB) that initiate meiotic recombination (PubMed:26917764). The complex promotes relaxation of negative and positive supercoiled DNA and DNA decatenation through cleavage and ligation cycles. Essential for the phosphorylation of SMC3, HORMAD1 and HORMAD2 (PubMed:22346761).</text>
</comment>
<comment type="function">
    <molecule>Isoform 4</molecule>
    <text evidence="8">In contrast to isoform 1, does not mediate DNA cleavage that forms the double-strand breaks (DSB) that initiate meiotic recombination.</text>
</comment>
<comment type="catalytic activity">
    <reaction evidence="3 15">
        <text>ATP-dependent breakage, passage and rejoining of double-stranded DNA.</text>
        <dbReference type="EC" id="5.6.2.2"/>
    </reaction>
</comment>
<comment type="cofactor">
    <cofactor evidence="2">
        <name>Mg(2+)</name>
        <dbReference type="ChEBI" id="CHEBI:18420"/>
    </cofactor>
</comment>
<comment type="subunit">
    <molecule>Isoform 1</molecule>
    <text evidence="9 15">Heterotetramer of SPO11 and 2 TOP6BL chains (Probable). Interacts with TOP6BL (PubMed:26917764).</text>
</comment>
<comment type="subunit">
    <molecule>Isoform 4</molecule>
    <text evidence="9">Does not interact with TOP6BL (PubMed:26917764).</text>
</comment>
<comment type="interaction">
    <interactant intactId="EBI-16201014">
        <id>Q9WTK8-1</id>
    </interactant>
    <interactant intactId="EBI-16200997">
        <id>J3QMY9</id>
        <label>Top6bl</label>
    </interactant>
    <organismsDiffer>false</organismsDiffer>
    <experiments>6</experiments>
</comment>
<comment type="subcellular location">
    <subcellularLocation>
        <location evidence="1">Nucleus</location>
    </subcellularLocation>
</comment>
<comment type="alternative products">
    <event type="alternative splicing"/>
    <isoform>
        <id>Q9WTK8-1</id>
        <name>1</name>
        <name evidence="14">Spo11beta</name>
        <name evidence="14">Beta</name>
        <sequence type="displayed"/>
    </isoform>
    <isoform>
        <id>Q9WTK8-2</id>
        <name>2</name>
        <sequence type="described" ref="VSP_007200"/>
    </isoform>
    <isoform>
        <id>Q9WTK8-3</id>
        <name>3</name>
        <sequence type="described" ref="VSP_007197 VSP_007198 VSP_007199"/>
    </isoform>
    <isoform>
        <id>Q9WTK8-4</id>
        <name>4</name>
        <name evidence="14">Spo11alpha</name>
        <name evidence="14">Alpha</name>
        <sequence type="described" ref="VSP_007197 VSP_007198"/>
    </isoform>
    <isoform>
        <id>Q9WTK8-5</id>
        <name>5</name>
        <sequence type="described" ref="VSP_007197 VSP_007198 VSP_007200"/>
    </isoform>
</comment>
<comment type="tissue specificity">
    <text evidence="4 5 6 7">High levels are found only in the testis where expression is restricted primarily to meiotic germ cells. Not expressed in spermatogonia. Highest levels are found in pachytene spermatocytes. Very low levels are found in thymus, brain and oocytes of embryonic ovary. Not detected in adult ovary (PubMed:10622720, PubMed:10855504). Isoform 1: Expressed early in meiosis, when most double-strand breaks (DSB) are formed (PubMed:21330546).</text>
</comment>
<comment type="developmental stage">
    <text evidence="5 6">Not detected at day 7 postpartum (dpp). Levels are low at 12 dpp but increase by 17 dpp. High levels are maintained throughout the remainder of testis development.</text>
</comment>
<comment type="similarity">
    <text evidence="15">Belongs to the TOP6A family.</text>
</comment>
<evidence type="ECO:0000250" key="1"/>
<evidence type="ECO:0000250" key="2">
    <source>
        <dbReference type="UniProtKB" id="Q57815"/>
    </source>
</evidence>
<evidence type="ECO:0000255" key="3">
    <source>
        <dbReference type="PROSITE-ProRule" id="PRU01385"/>
    </source>
</evidence>
<evidence type="ECO:0000269" key="4">
    <source>
    </source>
</evidence>
<evidence type="ECO:0000269" key="5">
    <source>
    </source>
</evidence>
<evidence type="ECO:0000269" key="6">
    <source>
    </source>
</evidence>
<evidence type="ECO:0000269" key="7">
    <source>
    </source>
</evidence>
<evidence type="ECO:0000269" key="8">
    <source>
    </source>
</evidence>
<evidence type="ECO:0000269" key="9">
    <source>
    </source>
</evidence>
<evidence type="ECO:0000303" key="10">
    <source>
    </source>
</evidence>
<evidence type="ECO:0000303" key="11">
    <source>
    </source>
</evidence>
<evidence type="ECO:0000303" key="12">
    <source>
    </source>
</evidence>
<evidence type="ECO:0000303" key="13">
    <source>
    </source>
</evidence>
<evidence type="ECO:0000303" key="14">
    <source>
    </source>
</evidence>
<evidence type="ECO:0000305" key="15"/>
<feature type="chain" id="PRO_0000145475" description="Meiotic recombination protein SPO11">
    <location>
        <begin position="1"/>
        <end position="396"/>
    </location>
</feature>
<feature type="domain" description="Topo IIA-type catalytic" evidence="3">
    <location>
        <begin position="42"/>
        <end position="177"/>
    </location>
</feature>
<feature type="active site" description="O-(5'-phospho-DNA)-tyrosine intermediate" evidence="3">
    <location>
        <position position="138"/>
    </location>
</feature>
<feature type="binding site" evidence="2">
    <location>
        <position position="224"/>
    </location>
    <ligand>
        <name>Mg(2+)</name>
        <dbReference type="ChEBI" id="CHEBI:18420"/>
    </ligand>
</feature>
<feature type="binding site" evidence="2">
    <location>
        <position position="277"/>
    </location>
    <ligand>
        <name>Mg(2+)</name>
        <dbReference type="ChEBI" id="CHEBI:18420"/>
    </ligand>
</feature>
<feature type="splice variant" id="VSP_007197" description="In isoform 3, isoform 4 and isoform 5." evidence="11 12 13">
    <location>
        <begin position="44"/>
        <end position="81"/>
    </location>
</feature>
<feature type="splice variant" id="VSP_007198" description="In isoform 3, isoform 4 and isoform 5." evidence="11 12 13">
    <original>M</original>
    <variation>R</variation>
    <location>
        <position position="82"/>
    </location>
</feature>
<feature type="splice variant" id="VSP_007199" description="In isoform 3." evidence="12 13">
    <original>R</original>
    <variation>RSNAHSVLTLHLHR</variation>
    <location>
        <position position="134"/>
    </location>
</feature>
<feature type="splice variant" id="VSP_007200" description="In isoform 2 and isoform 5." evidence="10 11">
    <location>
        <begin position="213"/>
        <end position="216"/>
    </location>
</feature>
<gene>
    <name type="primary">Spo11</name>
</gene>
<reference key="1">
    <citation type="journal article" date="1999" name="FEBS Lett.">
        <title>Differential gene expression of mammalian SPO11/TOP6A homologs during meiosis.</title>
        <authorList>
            <person name="Shannon M."/>
            <person name="Richardson L."/>
            <person name="Christian A."/>
            <person name="Handel M.A."/>
            <person name="Thelen M.P."/>
        </authorList>
    </citation>
    <scope>NUCLEOTIDE SEQUENCE [MRNA] (ISOFORMS 3 AND 4)</scope>
    <scope>TISSUE SPECIFICITY</scope>
    <scope>DEVELOPMENTAL STAGE</scope>
    <source>
        <strain>BALB/cJ</strain>
        <tissue>Spermatocyte</tissue>
    </source>
</reference>
<reference key="2">
    <citation type="journal article" date="1999" name="Genomics">
        <title>Cloning, characterization, and localization of mouse and human SPO11.</title>
        <authorList>
            <person name="Romanienko P.J."/>
            <person name="Camerini-Otero R.D."/>
        </authorList>
    </citation>
    <scope>NUCLEOTIDE SEQUENCE [MRNA] (ISOFORMS 1 AND 2)</scope>
    <scope>TISSUE SPECIFICITY</scope>
    <source>
        <strain>BALB/cJ</strain>
        <tissue>Testis</tissue>
    </source>
</reference>
<reference key="3">
    <citation type="journal article" date="1999" name="Genomics">
        <title>A mouse homolog of the Saccharomyces cerevisiae meiotic recombination DNA transesterase Spo11p.</title>
        <authorList>
            <person name="Keeney S."/>
            <person name="Baudat F."/>
            <person name="Angeles M."/>
            <person name="Zhou Z.-H."/>
            <person name="Copeland N.G."/>
            <person name="Jenkins N.A."/>
            <person name="Manova K."/>
            <person name="Jasin M."/>
        </authorList>
    </citation>
    <scope>NUCLEOTIDE SEQUENCE [GENOMIC DNA / MRNA] (ISOFORMS 4 AND 5)</scope>
    <source>
        <strain>129/SvJ</strain>
        <tissue>Testis</tissue>
    </source>
</reference>
<reference key="4">
    <citation type="journal article" date="2000" name="Chromosoma">
        <title>Identification and characterization of an SPO11 homolog in the mouse.</title>
        <authorList>
            <person name="Metzler-Guillemain C."/>
            <person name="de Massy B."/>
        </authorList>
    </citation>
    <scope>NUCLEOTIDE SEQUENCE [MRNA] (ISOFORMS 1; 3 AND 4)</scope>
    <scope>TISSUE SPECIFICITY</scope>
    <scope>DEVELOPMENTAL STAGE</scope>
    <source>
        <tissue>Testis</tissue>
    </source>
</reference>
<reference key="5">
    <citation type="submission" date="2001-11" db="EMBL/GenBank/DDBJ databases">
        <authorList>
            <person name="Tokuyama H."/>
            <person name="Tokuyama Y."/>
        </authorList>
    </citation>
    <scope>NUCLEOTIDE SEQUENCE OF 45-93</scope>
    <source>
        <strain>BALB/cJ</strain>
        <tissue>Thymus</tissue>
    </source>
</reference>
<reference key="6">
    <citation type="journal article" date="2011" name="Science">
        <title>Distinct properties of the XY pseudoautosomal region crucial for male meiosis.</title>
        <authorList>
            <person name="Kauppi L."/>
            <person name="Barchi M."/>
            <person name="Baudat F."/>
            <person name="Romanienko P.J."/>
            <person name="Keeney S."/>
            <person name="Jasin M."/>
        </authorList>
    </citation>
    <scope>FUNCTION (ISOFORM 1)</scope>
    <scope>FUNCTION (ISOFORM 4)</scope>
    <scope>TISSUE SPECIFICITY (ISOFORM 1)</scope>
</reference>
<reference key="7">
    <citation type="journal article" date="2012" name="PLoS Genet.">
        <title>Phosphorylation of chromosome core components may serve as axis marks for the status of chromosomal events during mammalian meiosis.</title>
        <authorList>
            <person name="Fukuda T."/>
            <person name="Pratto F."/>
            <person name="Schimenti J.C."/>
            <person name="Turner J.M."/>
            <person name="Camerini-Otero R.D."/>
            <person name="Hoeoeg C."/>
        </authorList>
    </citation>
    <scope>FUNCTION</scope>
</reference>
<reference key="8">
    <citation type="journal article" date="2016" name="Science">
        <title>The TopoVIB-Like protein family is required for meiotic DNA double-strand break formation.</title>
        <authorList>
            <person name="Robert T."/>
            <person name="Nore A."/>
            <person name="Brun C."/>
            <person name="Maffre C."/>
            <person name="Crimi B."/>
            <person name="Bourbon H.M."/>
            <person name="de Massy B."/>
        </authorList>
    </citation>
    <scope>INTERACTION WITH TOP6BL (ISOFORM 1)</scope>
</reference>
<keyword id="KW-0025">Alternative splicing</keyword>
<keyword id="KW-0238">DNA-binding</keyword>
<keyword id="KW-0413">Isomerase</keyword>
<keyword id="KW-0460">Magnesium</keyword>
<keyword id="KW-0469">Meiosis</keyword>
<keyword id="KW-0479">Metal-binding</keyword>
<keyword id="KW-0539">Nucleus</keyword>
<keyword id="KW-1185">Reference proteome</keyword>
<keyword id="KW-0799">Topoisomerase</keyword>
<accession>Q9WTK8</accession>
<accession>Q8VIH6</accession>
<accession>Q9QUK2</accession>
<accession>Q9QY57</accession>
<accession>Q9QZS1</accession>